<reference key="1">
    <citation type="journal article" date="2011" name="J. Bacteriol.">
        <title>Complete genome sequence of the metabolically versatile plant growth-promoting endophyte, Variovorax paradoxus S110.</title>
        <authorList>
            <person name="Han J.I."/>
            <person name="Choi H.K."/>
            <person name="Lee S.W."/>
            <person name="Orwin P.M."/>
            <person name="Kim J."/>
            <person name="Laroe S.L."/>
            <person name="Kim T.G."/>
            <person name="O'Neil J."/>
            <person name="Leadbetter J.R."/>
            <person name="Lee S.Y."/>
            <person name="Hur C.G."/>
            <person name="Spain J.C."/>
            <person name="Ovchinnikova G."/>
            <person name="Goodwin L."/>
            <person name="Han C."/>
        </authorList>
    </citation>
    <scope>NUCLEOTIDE SEQUENCE [LARGE SCALE GENOMIC DNA]</scope>
    <source>
        <strain>S110</strain>
    </source>
</reference>
<protein>
    <recommendedName>
        <fullName evidence="1">Probable protein kinase UbiB</fullName>
        <ecNumber evidence="1">2.7.-.-</ecNumber>
    </recommendedName>
    <alternativeName>
        <fullName evidence="1">Ubiquinone biosynthesis protein UbiB</fullName>
    </alternativeName>
</protein>
<feature type="chain" id="PRO_1000206018" description="Probable protein kinase UbiB">
    <location>
        <begin position="1"/>
        <end position="521"/>
    </location>
</feature>
<feature type="transmembrane region" description="Helical" evidence="1">
    <location>
        <begin position="496"/>
        <end position="516"/>
    </location>
</feature>
<feature type="domain" description="Protein kinase" evidence="1">
    <location>
        <begin position="119"/>
        <end position="497"/>
    </location>
</feature>
<feature type="active site" description="Proton acceptor" evidence="1">
    <location>
        <position position="286"/>
    </location>
</feature>
<feature type="binding site" evidence="1">
    <location>
        <begin position="125"/>
        <end position="133"/>
    </location>
    <ligand>
        <name>ATP</name>
        <dbReference type="ChEBI" id="CHEBI:30616"/>
    </ligand>
</feature>
<feature type="binding site" evidence="1">
    <location>
        <position position="151"/>
    </location>
    <ligand>
        <name>ATP</name>
        <dbReference type="ChEBI" id="CHEBI:30616"/>
    </ligand>
</feature>
<evidence type="ECO:0000255" key="1">
    <source>
        <dbReference type="HAMAP-Rule" id="MF_00414"/>
    </source>
</evidence>
<organism>
    <name type="scientific">Variovorax paradoxus (strain S110)</name>
    <dbReference type="NCBI Taxonomy" id="543728"/>
    <lineage>
        <taxon>Bacteria</taxon>
        <taxon>Pseudomonadati</taxon>
        <taxon>Pseudomonadota</taxon>
        <taxon>Betaproteobacteria</taxon>
        <taxon>Burkholderiales</taxon>
        <taxon>Comamonadaceae</taxon>
        <taxon>Variovorax</taxon>
    </lineage>
</organism>
<proteinExistence type="inferred from homology"/>
<sequence length="521" mass="59850">MRRFYRGIFIVWVALRYGLDELVLTSFQKPWLRVVARIVSIGRNLDAPRGQRLREALERLGPIFVKFGQVLSTRRDLLPPDIADELAFLQDRVPPFPSAVAIATIERAFRRPVGDVFVQFDETPIASASIAQVHFATIRTDEGEVREVAVKVLRPSMRGVIEKDLALMAMMAGWVEKLSPDGKRLKPREVVGEFDKYLHDELDLVREAANAAQLRRNMASLELVLIPEMFWDFCHPEVIVMERMNGVPIAQLDRLRAAGVDIPKLARDGVTIFFTQVFRDGFFHADMHPGNIQVSLAPETFGRYISLDFGIIGTLTESDKEYLAQNFVAFFRRDYKRVAELHLESGWVPEGTRIDELEGAIRTVCEPYFDRPLKEISLGMVLMRLFQTSRRFHVEIQPQLVLLQKTLLNIEGLGRQLDPELDLWHTAKPFLEKWMVDQIGPKKLFQQLKAEAPRYAKLLPELPRLLHDFLENRPADHRRELLELLAAQKRTNRLLQTIIYGGIGFVLGLLAMQLLVRVRLF</sequence>
<accession>C5CWY2</accession>
<gene>
    <name evidence="1" type="primary">ubiB</name>
    <name type="ordered locus">Vapar_4126</name>
</gene>
<name>UBIB_VARPS</name>
<keyword id="KW-0067">ATP-binding</keyword>
<keyword id="KW-0997">Cell inner membrane</keyword>
<keyword id="KW-1003">Cell membrane</keyword>
<keyword id="KW-0418">Kinase</keyword>
<keyword id="KW-0472">Membrane</keyword>
<keyword id="KW-0547">Nucleotide-binding</keyword>
<keyword id="KW-0808">Transferase</keyword>
<keyword id="KW-0812">Transmembrane</keyword>
<keyword id="KW-1133">Transmembrane helix</keyword>
<keyword id="KW-0831">Ubiquinone biosynthesis</keyword>
<comment type="function">
    <text evidence="1">Is probably a protein kinase regulator of UbiI activity which is involved in aerobic coenzyme Q (ubiquinone) biosynthesis.</text>
</comment>
<comment type="pathway">
    <text>Cofactor biosynthesis; ubiquinone biosynthesis [regulation].</text>
</comment>
<comment type="subcellular location">
    <subcellularLocation>
        <location evidence="1">Cell inner membrane</location>
        <topology evidence="1">Single-pass membrane protein</topology>
    </subcellularLocation>
</comment>
<comment type="similarity">
    <text evidence="1">Belongs to the ABC1 family. UbiB subfamily.</text>
</comment>
<dbReference type="EC" id="2.7.-.-" evidence="1"/>
<dbReference type="EMBL" id="CP001635">
    <property type="protein sequence ID" value="ACS20739.1"/>
    <property type="molecule type" value="Genomic_DNA"/>
</dbReference>
<dbReference type="SMR" id="C5CWY2"/>
<dbReference type="STRING" id="543728.Vapar_4126"/>
<dbReference type="KEGG" id="vap:Vapar_4126"/>
<dbReference type="eggNOG" id="COG0661">
    <property type="taxonomic scope" value="Bacteria"/>
</dbReference>
<dbReference type="HOGENOM" id="CLU_006533_0_0_4"/>
<dbReference type="OrthoDB" id="9795390at2"/>
<dbReference type="UniPathway" id="UPA00232"/>
<dbReference type="GO" id="GO:0005886">
    <property type="term" value="C:plasma membrane"/>
    <property type="evidence" value="ECO:0007669"/>
    <property type="project" value="UniProtKB-SubCell"/>
</dbReference>
<dbReference type="GO" id="GO:0005524">
    <property type="term" value="F:ATP binding"/>
    <property type="evidence" value="ECO:0007669"/>
    <property type="project" value="UniProtKB-KW"/>
</dbReference>
<dbReference type="GO" id="GO:0004672">
    <property type="term" value="F:protein kinase activity"/>
    <property type="evidence" value="ECO:0007669"/>
    <property type="project" value="UniProtKB-UniRule"/>
</dbReference>
<dbReference type="GO" id="GO:0010795">
    <property type="term" value="P:regulation of ubiquinone biosynthetic process"/>
    <property type="evidence" value="ECO:0007669"/>
    <property type="project" value="UniProtKB-UniRule"/>
</dbReference>
<dbReference type="GO" id="GO:0006744">
    <property type="term" value="P:ubiquinone biosynthetic process"/>
    <property type="evidence" value="ECO:0007669"/>
    <property type="project" value="UniProtKB-UniPathway"/>
</dbReference>
<dbReference type="CDD" id="cd13972">
    <property type="entry name" value="UbiB"/>
    <property type="match status" value="1"/>
</dbReference>
<dbReference type="HAMAP" id="MF_00414">
    <property type="entry name" value="UbiB"/>
    <property type="match status" value="1"/>
</dbReference>
<dbReference type="InterPro" id="IPR004147">
    <property type="entry name" value="ABC1_dom"/>
</dbReference>
<dbReference type="InterPro" id="IPR011009">
    <property type="entry name" value="Kinase-like_dom_sf"/>
</dbReference>
<dbReference type="InterPro" id="IPR010232">
    <property type="entry name" value="UbiB"/>
</dbReference>
<dbReference type="InterPro" id="IPR045308">
    <property type="entry name" value="UbiB_bact"/>
</dbReference>
<dbReference type="InterPro" id="IPR050154">
    <property type="entry name" value="UbiB_kinase"/>
</dbReference>
<dbReference type="NCBIfam" id="NF003404">
    <property type="entry name" value="PRK04750.1"/>
    <property type="match status" value="1"/>
</dbReference>
<dbReference type="NCBIfam" id="TIGR01982">
    <property type="entry name" value="UbiB"/>
    <property type="match status" value="1"/>
</dbReference>
<dbReference type="PANTHER" id="PTHR10566">
    <property type="entry name" value="CHAPERONE-ACTIVITY OF BC1 COMPLEX CABC1 -RELATED"/>
    <property type="match status" value="1"/>
</dbReference>
<dbReference type="PANTHER" id="PTHR10566:SF113">
    <property type="entry name" value="PROTEIN ACTIVITY OF BC1 COMPLEX KINASE 7, CHLOROPLASTIC"/>
    <property type="match status" value="1"/>
</dbReference>
<dbReference type="Pfam" id="PF03109">
    <property type="entry name" value="ABC1"/>
    <property type="match status" value="1"/>
</dbReference>
<dbReference type="SUPFAM" id="SSF56112">
    <property type="entry name" value="Protein kinase-like (PK-like)"/>
    <property type="match status" value="1"/>
</dbReference>